<gene>
    <name evidence="1" type="primary">metN</name>
    <name type="ordered locus">ECP_0209</name>
</gene>
<feature type="chain" id="PRO_0000270299" description="Methionine import ATP-binding protein MetN">
    <location>
        <begin position="1"/>
        <end position="343"/>
    </location>
</feature>
<feature type="domain" description="ABC transporter" evidence="1">
    <location>
        <begin position="2"/>
        <end position="241"/>
    </location>
</feature>
<feature type="binding site" evidence="1">
    <location>
        <begin position="38"/>
        <end position="45"/>
    </location>
    <ligand>
        <name>ATP</name>
        <dbReference type="ChEBI" id="CHEBI:30616"/>
    </ligand>
</feature>
<dbReference type="EC" id="7.4.2.11" evidence="1"/>
<dbReference type="EMBL" id="CP000247">
    <property type="protein sequence ID" value="ABG68249.1"/>
    <property type="molecule type" value="Genomic_DNA"/>
</dbReference>
<dbReference type="RefSeq" id="WP_000593991.1">
    <property type="nucleotide sequence ID" value="NC_008253.1"/>
</dbReference>
<dbReference type="SMR" id="Q0TLD2"/>
<dbReference type="GeneID" id="75058693"/>
<dbReference type="KEGG" id="ecp:ECP_0209"/>
<dbReference type="HOGENOM" id="CLU_000604_1_3_6"/>
<dbReference type="Proteomes" id="UP000009182">
    <property type="component" value="Chromosome"/>
</dbReference>
<dbReference type="GO" id="GO:0009276">
    <property type="term" value="C:Gram-negative-bacterium-type cell wall"/>
    <property type="evidence" value="ECO:0007669"/>
    <property type="project" value="InterPro"/>
</dbReference>
<dbReference type="GO" id="GO:0005886">
    <property type="term" value="C:plasma membrane"/>
    <property type="evidence" value="ECO:0007669"/>
    <property type="project" value="UniProtKB-SubCell"/>
</dbReference>
<dbReference type="GO" id="GO:0033232">
    <property type="term" value="F:ABC-type D-methionine transporter activity"/>
    <property type="evidence" value="ECO:0007669"/>
    <property type="project" value="UniProtKB-EC"/>
</dbReference>
<dbReference type="GO" id="GO:0005524">
    <property type="term" value="F:ATP binding"/>
    <property type="evidence" value="ECO:0007669"/>
    <property type="project" value="UniProtKB-KW"/>
</dbReference>
<dbReference type="GO" id="GO:0016887">
    <property type="term" value="F:ATP hydrolysis activity"/>
    <property type="evidence" value="ECO:0007669"/>
    <property type="project" value="InterPro"/>
</dbReference>
<dbReference type="CDD" id="cd03258">
    <property type="entry name" value="ABC_MetN_methionine_transporter"/>
    <property type="match status" value="1"/>
</dbReference>
<dbReference type="FunFam" id="3.30.70.260:FF:000014">
    <property type="entry name" value="Methionine import ATP-binding protein MetN"/>
    <property type="match status" value="1"/>
</dbReference>
<dbReference type="FunFam" id="3.40.50.300:FF:000233">
    <property type="entry name" value="Methionine import ATP-binding protein MetN"/>
    <property type="match status" value="1"/>
</dbReference>
<dbReference type="Gene3D" id="3.30.70.260">
    <property type="match status" value="1"/>
</dbReference>
<dbReference type="Gene3D" id="3.40.50.300">
    <property type="entry name" value="P-loop containing nucleotide triphosphate hydrolases"/>
    <property type="match status" value="1"/>
</dbReference>
<dbReference type="InterPro" id="IPR003593">
    <property type="entry name" value="AAA+_ATPase"/>
</dbReference>
<dbReference type="InterPro" id="IPR012692">
    <property type="entry name" value="ABC_MetN_proteobac"/>
</dbReference>
<dbReference type="InterPro" id="IPR003439">
    <property type="entry name" value="ABC_transporter-like_ATP-bd"/>
</dbReference>
<dbReference type="InterPro" id="IPR017871">
    <property type="entry name" value="ABC_transporter-like_CS"/>
</dbReference>
<dbReference type="InterPro" id="IPR045865">
    <property type="entry name" value="ACT-like_dom_sf"/>
</dbReference>
<dbReference type="InterPro" id="IPR041701">
    <property type="entry name" value="MetN_ABC"/>
</dbReference>
<dbReference type="InterPro" id="IPR050086">
    <property type="entry name" value="MetN_ABC_transporter-like"/>
</dbReference>
<dbReference type="InterPro" id="IPR018449">
    <property type="entry name" value="NIL_domain"/>
</dbReference>
<dbReference type="InterPro" id="IPR027417">
    <property type="entry name" value="P-loop_NTPase"/>
</dbReference>
<dbReference type="NCBIfam" id="TIGR02314">
    <property type="entry name" value="ABC_MetN"/>
    <property type="match status" value="1"/>
</dbReference>
<dbReference type="PANTHER" id="PTHR43166">
    <property type="entry name" value="AMINO ACID IMPORT ATP-BINDING PROTEIN"/>
    <property type="match status" value="1"/>
</dbReference>
<dbReference type="PANTHER" id="PTHR43166:SF30">
    <property type="entry name" value="METHIONINE IMPORT ATP-BINDING PROTEIN METN"/>
    <property type="match status" value="1"/>
</dbReference>
<dbReference type="Pfam" id="PF00005">
    <property type="entry name" value="ABC_tran"/>
    <property type="match status" value="1"/>
</dbReference>
<dbReference type="Pfam" id="PF09383">
    <property type="entry name" value="NIL"/>
    <property type="match status" value="1"/>
</dbReference>
<dbReference type="SMART" id="SM00382">
    <property type="entry name" value="AAA"/>
    <property type="match status" value="1"/>
</dbReference>
<dbReference type="SMART" id="SM00930">
    <property type="entry name" value="NIL"/>
    <property type="match status" value="1"/>
</dbReference>
<dbReference type="SUPFAM" id="SSF55021">
    <property type="entry name" value="ACT-like"/>
    <property type="match status" value="1"/>
</dbReference>
<dbReference type="SUPFAM" id="SSF52540">
    <property type="entry name" value="P-loop containing nucleoside triphosphate hydrolases"/>
    <property type="match status" value="1"/>
</dbReference>
<dbReference type="PROSITE" id="PS00211">
    <property type="entry name" value="ABC_TRANSPORTER_1"/>
    <property type="match status" value="1"/>
</dbReference>
<dbReference type="PROSITE" id="PS50893">
    <property type="entry name" value="ABC_TRANSPORTER_2"/>
    <property type="match status" value="1"/>
</dbReference>
<dbReference type="PROSITE" id="PS51264">
    <property type="entry name" value="METN"/>
    <property type="match status" value="1"/>
</dbReference>
<reference key="1">
    <citation type="journal article" date="2006" name="Mol. Microbiol.">
        <title>Role of pathogenicity island-associated integrases in the genome plasticity of uropathogenic Escherichia coli strain 536.</title>
        <authorList>
            <person name="Hochhut B."/>
            <person name="Wilde C."/>
            <person name="Balling G."/>
            <person name="Middendorf B."/>
            <person name="Dobrindt U."/>
            <person name="Brzuszkiewicz E."/>
            <person name="Gottschalk G."/>
            <person name="Carniel E."/>
            <person name="Hacker J."/>
        </authorList>
    </citation>
    <scope>NUCLEOTIDE SEQUENCE [LARGE SCALE GENOMIC DNA]</scope>
    <source>
        <strain>536 / UPEC</strain>
    </source>
</reference>
<protein>
    <recommendedName>
        <fullName evidence="1">Methionine import ATP-binding protein MetN</fullName>
        <ecNumber evidence="1">7.4.2.11</ecNumber>
    </recommendedName>
</protein>
<accession>Q0TLD2</accession>
<evidence type="ECO:0000255" key="1">
    <source>
        <dbReference type="HAMAP-Rule" id="MF_01719"/>
    </source>
</evidence>
<organism>
    <name type="scientific">Escherichia coli O6:K15:H31 (strain 536 / UPEC)</name>
    <dbReference type="NCBI Taxonomy" id="362663"/>
    <lineage>
        <taxon>Bacteria</taxon>
        <taxon>Pseudomonadati</taxon>
        <taxon>Pseudomonadota</taxon>
        <taxon>Gammaproteobacteria</taxon>
        <taxon>Enterobacterales</taxon>
        <taxon>Enterobacteriaceae</taxon>
        <taxon>Escherichia</taxon>
    </lineage>
</organism>
<sequence>MIKLSNITKVFHQGTRTIQALNNVSLHVPAGQIYGVIGASGAGKSTLIRCVNLLERPTEGSVLVDGQELTTLSESELTKARRQIGMIFQHFNLLSSRTVFGNVALPLELDNTPKDEIKRRVTELLSLVGLGDKHDSYPSNLSGGQKQRVAIARALASNPKVLLCDEATSALDPATTRSILELLKDINRRLGLTILLITHEMDVVKRICDCVAVISNGELIEQDTVSEVFSHPKTPLAQKFIQSTLHLDIPEDYQERLQAEPFADCVPMLRLEFTGQSVDAPLLSETARRFNVNNNIISAQMDYAGGVKFGIMLTEMHGTQQDTQAAIAWLQEHHVKVEVLGYV</sequence>
<proteinExistence type="inferred from homology"/>
<name>METN_ECOL5</name>
<keyword id="KW-0029">Amino-acid transport</keyword>
<keyword id="KW-0067">ATP-binding</keyword>
<keyword id="KW-0997">Cell inner membrane</keyword>
<keyword id="KW-1003">Cell membrane</keyword>
<keyword id="KW-0472">Membrane</keyword>
<keyword id="KW-0547">Nucleotide-binding</keyword>
<keyword id="KW-1278">Translocase</keyword>
<keyword id="KW-0813">Transport</keyword>
<comment type="function">
    <text evidence="1">Part of the ABC transporter complex MetNIQ involved in methionine import. Responsible for energy coupling to the transport system.</text>
</comment>
<comment type="catalytic activity">
    <reaction evidence="1">
        <text>L-methionine(out) + ATP + H2O = L-methionine(in) + ADP + phosphate + H(+)</text>
        <dbReference type="Rhea" id="RHEA:29779"/>
        <dbReference type="ChEBI" id="CHEBI:15377"/>
        <dbReference type="ChEBI" id="CHEBI:15378"/>
        <dbReference type="ChEBI" id="CHEBI:30616"/>
        <dbReference type="ChEBI" id="CHEBI:43474"/>
        <dbReference type="ChEBI" id="CHEBI:57844"/>
        <dbReference type="ChEBI" id="CHEBI:456216"/>
        <dbReference type="EC" id="7.4.2.11"/>
    </reaction>
</comment>
<comment type="catalytic activity">
    <reaction evidence="1">
        <text>D-methionine(out) + ATP + H2O = D-methionine(in) + ADP + phosphate + H(+)</text>
        <dbReference type="Rhea" id="RHEA:29767"/>
        <dbReference type="ChEBI" id="CHEBI:15377"/>
        <dbReference type="ChEBI" id="CHEBI:15378"/>
        <dbReference type="ChEBI" id="CHEBI:30616"/>
        <dbReference type="ChEBI" id="CHEBI:43474"/>
        <dbReference type="ChEBI" id="CHEBI:57932"/>
        <dbReference type="ChEBI" id="CHEBI:456216"/>
        <dbReference type="EC" id="7.4.2.11"/>
    </reaction>
</comment>
<comment type="subunit">
    <text evidence="1">The complex is composed of two ATP-binding proteins (MetN), two transmembrane proteins (MetI) and a solute-binding protein (MetQ).</text>
</comment>
<comment type="subcellular location">
    <subcellularLocation>
        <location evidence="1">Cell inner membrane</location>
        <topology evidence="1">Peripheral membrane protein</topology>
    </subcellularLocation>
</comment>
<comment type="similarity">
    <text evidence="1">Belongs to the ABC transporter superfamily. Methionine importer (TC 3.A.1.24) family.</text>
</comment>